<reference key="1">
    <citation type="journal article" date="1997" name="J. Biol. Chem.">
        <title>cDNA cloning and characterization of a cis-retinol/3alpha-hydroxysterol short-chain dehydrogenase.</title>
        <authorList>
            <person name="Chai X."/>
            <person name="Zhai Y."/>
            <person name="Napoli J.L."/>
        </authorList>
    </citation>
    <scope>NUCLEOTIDE SEQUENCE [MRNA]</scope>
    <scope>CATALYTIC ACTIVITY</scope>
    <scope>FUNCTION</scope>
    <scope>BIOPHYSICOCHEMICAL PROPERTIES</scope>
    <scope>SUBCELLULAR LOCATION</scope>
</reference>
<reference key="2">
    <citation type="journal article" date="2009" name="PLoS Biol.">
        <title>Lineage-specific biology revealed by a finished genome assembly of the mouse.</title>
        <authorList>
            <person name="Church D.M."/>
            <person name="Goodstadt L."/>
            <person name="Hillier L.W."/>
            <person name="Zody M.C."/>
            <person name="Goldstein S."/>
            <person name="She X."/>
            <person name="Bult C.J."/>
            <person name="Agarwala R."/>
            <person name="Cherry J.L."/>
            <person name="DiCuccio M."/>
            <person name="Hlavina W."/>
            <person name="Kapustin Y."/>
            <person name="Meric P."/>
            <person name="Maglott D."/>
            <person name="Birtle Z."/>
            <person name="Marques A.C."/>
            <person name="Graves T."/>
            <person name="Zhou S."/>
            <person name="Teague B."/>
            <person name="Potamousis K."/>
            <person name="Churas C."/>
            <person name="Place M."/>
            <person name="Herschleb J."/>
            <person name="Runnheim R."/>
            <person name="Forrest D."/>
            <person name="Amos-Landgraf J."/>
            <person name="Schwartz D.C."/>
            <person name="Cheng Z."/>
            <person name="Lindblad-Toh K."/>
            <person name="Eichler E.E."/>
            <person name="Ponting C.P."/>
        </authorList>
    </citation>
    <scope>NUCLEOTIDE SEQUENCE [LARGE SCALE GENOMIC DNA]</scope>
    <source>
        <strain>C57BL/6J</strain>
    </source>
</reference>
<reference key="3">
    <citation type="submission" date="2005-07" db="EMBL/GenBank/DDBJ databases">
        <authorList>
            <person name="Mural R.J."/>
            <person name="Adams M.D."/>
            <person name="Myers E.W."/>
            <person name="Smith H.O."/>
            <person name="Venter J.C."/>
        </authorList>
    </citation>
    <scope>NUCLEOTIDE SEQUENCE [LARGE SCALE GENOMIC DNA]</scope>
</reference>
<reference key="4">
    <citation type="journal article" date="2004" name="Genome Res.">
        <title>The status, quality, and expansion of the NIH full-length cDNA project: the Mammalian Gene Collection (MGC).</title>
        <authorList>
            <consortium name="The MGC Project Team"/>
        </authorList>
    </citation>
    <scope>NUCLEOTIDE SEQUENCE [LARGE SCALE MRNA]</scope>
    <source>
        <tissue>Kidney</tissue>
    </source>
</reference>
<reference key="5">
    <citation type="journal article" date="2001" name="J. Biol. Chem.">
        <title>Biosynthesis of 9-cis-retinoic acid in vivo. The roles of different retinol dehydrogenases and a structure-activity analysis of microsomal retinol dehydrogenases.</title>
        <authorList>
            <person name="Tryggvason K."/>
            <person name="Romert A."/>
            <person name="Eriksson U."/>
        </authorList>
    </citation>
    <scope>SUBCELLULAR LOCATION</scope>
    <scope>DOMAIN</scope>
</reference>
<reference key="6">
    <citation type="journal article" date="2004" name="J. Biol. Chem.">
        <title>Elements in the N-terminal signaling sequence that determine cytosolic topology of short-chain dehydrogenases/reductases. Studies with retinol dehydrogenase type 1 and cis-retinol/androgen dehydrogenase type 1.</title>
        <authorList>
            <person name="Zhang M."/>
            <person name="Hu P."/>
            <person name="Napoli J.L."/>
        </authorList>
    </citation>
    <scope>SUBCELLULAR LOCATION</scope>
    <scope>CAUTION</scope>
    <scope>TOPOLOGY</scope>
    <scope>NOT GLYCOSYLATED</scope>
</reference>
<reference key="7">
    <citation type="journal article" date="2005" name="Exp. Cell Res.">
        <title>The C-terminal region of cis-retinol/androgen dehydrogenase 1 (CRAD1) confers ER localization and in vivo enzymatic function.</title>
        <authorList>
            <person name="Liden M."/>
            <person name="Tryggvason K."/>
            <person name="Eriksson U."/>
        </authorList>
    </citation>
    <scope>SUBCELLULAR LOCATION</scope>
    <scope>SUBUNIT</scope>
    <scope>DOMAIN</scope>
    <scope>CATALYTIC ACTIVITY</scope>
    <scope>TOPOLOGY</scope>
    <scope>CAUTION</scope>
</reference>
<reference key="8">
    <citation type="journal article" date="2010" name="Cell">
        <title>A tissue-specific atlas of mouse protein phosphorylation and expression.</title>
        <authorList>
            <person name="Huttlin E.L."/>
            <person name="Jedrychowski M.P."/>
            <person name="Elias J.E."/>
            <person name="Goswami T."/>
            <person name="Rad R."/>
            <person name="Beausoleil S.A."/>
            <person name="Villen J."/>
            <person name="Haas W."/>
            <person name="Sowa M.E."/>
            <person name="Gygi S.P."/>
        </authorList>
    </citation>
    <scope>IDENTIFICATION BY MASS SPECTROMETRY [LARGE SCALE ANALYSIS]</scope>
</reference>
<comment type="function">
    <text evidence="2">Oxidoreductase with a preference for NAD. Oxidizes all-trans-retinol, 9-cis-retinol, 11-cis-retinol and 13-cis-retinol to the corresponding aldehydes. Has higher activity towards CRBP-bound retinol than with free retinol. Oxidizes 3-alpha-hydroxysteroids. Oxidizes androstanediol and androsterone to dihydrotestosterone and androstanedione. Can also catalyze the reverse reaction.</text>
</comment>
<comment type="catalytic activity">
    <reaction evidence="2">
        <text>all-trans-retinol--[retinol-binding protein] + NAD(+) = all-trans-retinal--[retinol-binding protein] + NADH + H(+)</text>
        <dbReference type="Rhea" id="RHEA:48488"/>
        <dbReference type="Rhea" id="RHEA-COMP:14428"/>
        <dbReference type="Rhea" id="RHEA-COMP:14430"/>
        <dbReference type="ChEBI" id="CHEBI:15378"/>
        <dbReference type="ChEBI" id="CHEBI:17336"/>
        <dbReference type="ChEBI" id="CHEBI:17898"/>
        <dbReference type="ChEBI" id="CHEBI:57540"/>
        <dbReference type="ChEBI" id="CHEBI:57945"/>
        <dbReference type="ChEBI" id="CHEBI:83228"/>
        <dbReference type="EC" id="1.1.1.105"/>
    </reaction>
</comment>
<comment type="catalytic activity">
    <reaction evidence="7 8">
        <text>9-cis-retinol + NAD(+) = 9-cis-retinal + NADH + H(+)</text>
        <dbReference type="Rhea" id="RHEA:42052"/>
        <dbReference type="ChEBI" id="CHEBI:15378"/>
        <dbReference type="ChEBI" id="CHEBI:57540"/>
        <dbReference type="ChEBI" id="CHEBI:57945"/>
        <dbReference type="ChEBI" id="CHEBI:78272"/>
        <dbReference type="ChEBI" id="CHEBI:78273"/>
    </reaction>
</comment>
<comment type="catalytic activity">
    <reaction evidence="8">
        <text>11-cis-retinol + NAD(+) = 11-cis-retinal + NADH + H(+)</text>
        <dbReference type="Rhea" id="RHEA:42060"/>
        <dbReference type="ChEBI" id="CHEBI:15378"/>
        <dbReference type="ChEBI" id="CHEBI:16066"/>
        <dbReference type="ChEBI" id="CHEBI:16302"/>
        <dbReference type="ChEBI" id="CHEBI:57540"/>
        <dbReference type="ChEBI" id="CHEBI:57945"/>
        <dbReference type="EC" id="1.1.1.315"/>
    </reaction>
</comment>
<comment type="catalytic activity">
    <reaction evidence="2">
        <text>13-cis-retinol + NAD(+) = 13-cis-retinal + NADH + H(+)</text>
        <dbReference type="Rhea" id="RHEA:42056"/>
        <dbReference type="ChEBI" id="CHEBI:15378"/>
        <dbReference type="ChEBI" id="CHEBI:45479"/>
        <dbReference type="ChEBI" id="CHEBI:45487"/>
        <dbReference type="ChEBI" id="CHEBI:57540"/>
        <dbReference type="ChEBI" id="CHEBI:57945"/>
    </reaction>
</comment>
<comment type="catalytic activity">
    <reaction evidence="8">
        <text>androsterone + NAD(+) = 5alpha-androstan-3,17-dione + NADH + H(+)</text>
        <dbReference type="Rhea" id="RHEA:20381"/>
        <dbReference type="ChEBI" id="CHEBI:15378"/>
        <dbReference type="ChEBI" id="CHEBI:15994"/>
        <dbReference type="ChEBI" id="CHEBI:16032"/>
        <dbReference type="ChEBI" id="CHEBI:57540"/>
        <dbReference type="ChEBI" id="CHEBI:57945"/>
        <dbReference type="EC" id="1.1.1.209"/>
    </reaction>
</comment>
<comment type="catalytic activity">
    <reaction evidence="8">
        <text>5alpha-androstane-3alpha,17beta-diol + NAD(+) = 17beta-hydroxy-5alpha-androstan-3-one + NADH + H(+)</text>
        <dbReference type="Rhea" id="RHEA:42004"/>
        <dbReference type="ChEBI" id="CHEBI:15378"/>
        <dbReference type="ChEBI" id="CHEBI:16330"/>
        <dbReference type="ChEBI" id="CHEBI:36713"/>
        <dbReference type="ChEBI" id="CHEBI:57540"/>
        <dbReference type="ChEBI" id="CHEBI:57945"/>
        <dbReference type="EC" id="1.1.1.53"/>
    </reaction>
</comment>
<comment type="biophysicochemical properties">
    <kinetics>
        <KM evidence="8">0.2 uM for 3alpha-hydroxy-5alpha-androstan-17-one (androsterone)</KM>
    </kinetics>
</comment>
<comment type="pathway">
    <text evidence="2">Cofactor metabolism; retinol metabolism.</text>
</comment>
<comment type="subunit">
    <text evidence="7">Homodimer.</text>
</comment>
<comment type="subcellular location">
    <subcellularLocation>
        <location evidence="5 6 7">Endoplasmic reticulum membrane</location>
        <topology evidence="3">Single-pass membrane protein</topology>
    </subcellularLocation>
    <subcellularLocation>
        <location evidence="8">Microsome membrane</location>
    </subcellularLocation>
</comment>
<comment type="domain">
    <text evidence="5 7">The C-terminal region plays a crucial role in controlling the activity of RDH16 and its required for endoplasmic reticulum (ER) retention.</text>
</comment>
<comment type="PTM">
    <text evidence="6">Not glycosylated.</text>
</comment>
<comment type="similarity">
    <text evidence="12">Belongs to the short-chain dehydrogenases/reductases (SDR) family.</text>
</comment>
<comment type="caution">
    <text evidence="5 6 7 12">Membrane topology is controversial (PubMed:15355969, PubMed:16223484). Membrane topology structure with endoplasmic reticulum lumen orientation of the catalytic domains while the C-terminus is in the cytosol have been suggested (PubMed:11279029, PubMed:16223484). Others investigators have argued for a reverse orientation, with a membrane-embedded N-terminal domain but no C-terminal transmembrane segment, and a cytosolic orientation of the catalytic domain (PubMed:15355969). These contradictory results are probably because of differences in the assay systems.</text>
</comment>
<organism>
    <name type="scientific">Mus musculus</name>
    <name type="common">Mouse</name>
    <dbReference type="NCBI Taxonomy" id="10090"/>
    <lineage>
        <taxon>Eukaryota</taxon>
        <taxon>Metazoa</taxon>
        <taxon>Chordata</taxon>
        <taxon>Craniata</taxon>
        <taxon>Vertebrata</taxon>
        <taxon>Euteleostomi</taxon>
        <taxon>Mammalia</taxon>
        <taxon>Eutheria</taxon>
        <taxon>Euarchontoglires</taxon>
        <taxon>Glires</taxon>
        <taxon>Rodentia</taxon>
        <taxon>Myomorpha</taxon>
        <taxon>Muroidea</taxon>
        <taxon>Muridae</taxon>
        <taxon>Murinae</taxon>
        <taxon>Mus</taxon>
        <taxon>Mus</taxon>
    </lineage>
</organism>
<accession>O54909</accession>
<evidence type="ECO:0000250" key="1"/>
<evidence type="ECO:0000250" key="2">
    <source>
        <dbReference type="UniProtKB" id="O75452"/>
    </source>
</evidence>
<evidence type="ECO:0000255" key="3"/>
<evidence type="ECO:0000255" key="4">
    <source>
        <dbReference type="PROSITE-ProRule" id="PRU10001"/>
    </source>
</evidence>
<evidence type="ECO:0000269" key="5">
    <source>
    </source>
</evidence>
<evidence type="ECO:0000269" key="6">
    <source>
    </source>
</evidence>
<evidence type="ECO:0000269" key="7">
    <source>
    </source>
</evidence>
<evidence type="ECO:0000269" key="8">
    <source>
    </source>
</evidence>
<evidence type="ECO:0000303" key="9">
    <source>
    </source>
</evidence>
<evidence type="ECO:0000303" key="10">
    <source>
    </source>
</evidence>
<evidence type="ECO:0000303" key="11">
    <source>
    </source>
</evidence>
<evidence type="ECO:0000305" key="12"/>
<evidence type="ECO:0000312" key="13">
    <source>
        <dbReference type="MGI" id="MGI:1201375"/>
    </source>
</evidence>
<gene>
    <name evidence="13" type="primary">Rdh16</name>
    <name evidence="11" type="synonym">Crad</name>
    <name evidence="10" type="synonym">Crad1</name>
    <name evidence="9" type="synonym">Rdh1</name>
    <name evidence="13" type="synonym">Rdh6</name>
</gene>
<feature type="chain" id="PRO_0000446674" description="Retinol dehydrogenase 16">
    <location>
        <begin position="1"/>
        <end position="317"/>
    </location>
</feature>
<feature type="transmembrane region" description="Helical" evidence="3">
    <location>
        <begin position="289"/>
        <end position="309"/>
    </location>
</feature>
<feature type="active site" description="Proton acceptor" evidence="2 4">
    <location>
        <position position="176"/>
    </location>
</feature>
<feature type="binding site" evidence="1">
    <location>
        <begin position="33"/>
        <end position="57"/>
    </location>
    <ligand>
        <name>NAD(+)</name>
        <dbReference type="ChEBI" id="CHEBI:57540"/>
    </ligand>
</feature>
<protein>
    <recommendedName>
        <fullName>Retinol dehydrogenase 16</fullName>
        <ecNumber evidence="2">1.1.1.105</ecNumber>
        <ecNumber evidence="8">1.1.1.209</ecNumber>
        <ecNumber evidence="8">1.1.1.315</ecNumber>
        <ecNumber evidence="2">1.1.1.53</ecNumber>
    </recommendedName>
    <alternativeName>
        <fullName evidence="11">Cis-retinol androgen dehydrogenase 1</fullName>
    </alternativeName>
</protein>
<name>RDH16_MOUSE</name>
<keyword id="KW-0256">Endoplasmic reticulum</keyword>
<keyword id="KW-0443">Lipid metabolism</keyword>
<keyword id="KW-0472">Membrane</keyword>
<keyword id="KW-0492">Microsome</keyword>
<keyword id="KW-0520">NAD</keyword>
<keyword id="KW-0560">Oxidoreductase</keyword>
<keyword id="KW-1185">Reference proteome</keyword>
<keyword id="KW-0753">Steroid metabolism</keyword>
<keyword id="KW-0812">Transmembrane</keyword>
<keyword id="KW-1133">Transmembrane helix</keyword>
<sequence>MWLYLVALVGLWTLLRFFRVRQVVSHLQDKYVFITGCDSGFGTLLARQLDRRGMRVLAACLTEKGAEELRNKTSDRLETVILDVTKTESIVTATQWVKEHVGNRGLWGLVNNAGISTPSGPNEWMKKQDFAHVLDVNLLGMIEVTLSMLPLVRKARGRVVNVSSVMGRVSLFGGGYCISKYGVEAFSDSLRRELSYFGVKVAIIEPGFFLTGVTSSARLCSNTQMLWDQTSSEIREIYGEKYLASYLKRLNKLDKRCNKDLSGVTDCMEHALTACHPRTRYSAGWDAKLFYLPLSYLPTFLVDALLYWTSLKPEKAL</sequence>
<dbReference type="EC" id="1.1.1.105" evidence="2"/>
<dbReference type="EC" id="1.1.1.209" evidence="8"/>
<dbReference type="EC" id="1.1.1.315" evidence="8"/>
<dbReference type="EC" id="1.1.1.53" evidence="2"/>
<dbReference type="EMBL" id="AF030513">
    <property type="protein sequence ID" value="AAB97166.1"/>
    <property type="molecule type" value="mRNA"/>
</dbReference>
<dbReference type="EMBL" id="AC131690">
    <property type="status" value="NOT_ANNOTATED_CDS"/>
    <property type="molecule type" value="Genomic_DNA"/>
</dbReference>
<dbReference type="EMBL" id="CH466578">
    <property type="protein sequence ID" value="EDL24525.1"/>
    <property type="molecule type" value="Genomic_DNA"/>
</dbReference>
<dbReference type="EMBL" id="BC089612">
    <property type="protein sequence ID" value="AAH89612.1"/>
    <property type="molecule type" value="mRNA"/>
</dbReference>
<dbReference type="CCDS" id="CCDS24252.1"/>
<dbReference type="RefSeq" id="NP_033066.1">
    <property type="nucleotide sequence ID" value="NM_009040.3"/>
</dbReference>
<dbReference type="RefSeq" id="XP_006513452.1">
    <property type="nucleotide sequence ID" value="XM_006513389.3"/>
</dbReference>
<dbReference type="SMR" id="O54909"/>
<dbReference type="FunCoup" id="O54909">
    <property type="interactions" value="225"/>
</dbReference>
<dbReference type="STRING" id="10090.ENSMUSP00000071573"/>
<dbReference type="SwissLipids" id="SLP:000000799"/>
<dbReference type="iPTMnet" id="O54909"/>
<dbReference type="PhosphoSitePlus" id="O54909"/>
<dbReference type="jPOST" id="O54909"/>
<dbReference type="PaxDb" id="10090-ENSMUSP00000071573"/>
<dbReference type="PeptideAtlas" id="O54909"/>
<dbReference type="ProteomicsDB" id="336748"/>
<dbReference type="DNASU" id="19683"/>
<dbReference type="Ensembl" id="ENSMUST00000071646.2">
    <property type="protein sequence ID" value="ENSMUSP00000071573.2"/>
    <property type="gene ID" value="ENSMUSG00000069456.5"/>
</dbReference>
<dbReference type="GeneID" id="19683"/>
<dbReference type="KEGG" id="mmu:19683"/>
<dbReference type="UCSC" id="uc007hkq.2">
    <property type="organism name" value="mouse"/>
</dbReference>
<dbReference type="AGR" id="MGI:1201375"/>
<dbReference type="CTD" id="8608"/>
<dbReference type="MGI" id="MGI:1201375">
    <property type="gene designation" value="Rdh16"/>
</dbReference>
<dbReference type="VEuPathDB" id="HostDB:ENSMUSG00000069456"/>
<dbReference type="eggNOG" id="KOG1610">
    <property type="taxonomic scope" value="Eukaryota"/>
</dbReference>
<dbReference type="GeneTree" id="ENSGT00940000154118"/>
<dbReference type="HOGENOM" id="CLU_010194_2_0_1"/>
<dbReference type="InParanoid" id="O54909"/>
<dbReference type="OMA" id="VDWLVIE"/>
<dbReference type="OrthoDB" id="37474at9989"/>
<dbReference type="PhylomeDB" id="O54909"/>
<dbReference type="TreeFam" id="TF325617"/>
<dbReference type="BRENDA" id="1.1.1.315">
    <property type="organism ID" value="3474"/>
</dbReference>
<dbReference type="UniPathway" id="UPA00912"/>
<dbReference type="BioGRID-ORCS" id="19683">
    <property type="hits" value="2 hits in 76 CRISPR screens"/>
</dbReference>
<dbReference type="ChiTaRS" id="Rdh16">
    <property type="organism name" value="mouse"/>
</dbReference>
<dbReference type="PRO" id="PR:O54909"/>
<dbReference type="Proteomes" id="UP000000589">
    <property type="component" value="Chromosome 10"/>
</dbReference>
<dbReference type="RNAct" id="O54909">
    <property type="molecule type" value="protein"/>
</dbReference>
<dbReference type="Bgee" id="ENSMUSG00000069456">
    <property type="expression patterns" value="Expressed in right kidney and 49 other cell types or tissues"/>
</dbReference>
<dbReference type="ExpressionAtlas" id="O54909">
    <property type="expression patterns" value="baseline and differential"/>
</dbReference>
<dbReference type="GO" id="GO:0005788">
    <property type="term" value="C:endoplasmic reticulum lumen"/>
    <property type="evidence" value="ECO:0000314"/>
    <property type="project" value="UniProtKB"/>
</dbReference>
<dbReference type="GO" id="GO:0005789">
    <property type="term" value="C:endoplasmic reticulum membrane"/>
    <property type="evidence" value="ECO:0000314"/>
    <property type="project" value="UniProtKB"/>
</dbReference>
<dbReference type="GO" id="GO:0031090">
    <property type="term" value="C:organelle membrane"/>
    <property type="evidence" value="ECO:0000314"/>
    <property type="project" value="MGI"/>
</dbReference>
<dbReference type="GO" id="GO:0106429">
    <property type="term" value="F:11-cis-retinol dehydrogenase"/>
    <property type="evidence" value="ECO:0007669"/>
    <property type="project" value="UniProtKB-EC"/>
</dbReference>
<dbReference type="GO" id="GO:0004745">
    <property type="term" value="F:all-trans-retinol dehydrogenase (NAD+) activity"/>
    <property type="evidence" value="ECO:0000314"/>
    <property type="project" value="UniProtKB"/>
</dbReference>
<dbReference type="GO" id="GO:0047044">
    <property type="term" value="F:androstan-3-alpha,17-beta-diol dehydrogenase (NAD+) activity"/>
    <property type="evidence" value="ECO:0007669"/>
    <property type="project" value="UniProtKB-EC"/>
</dbReference>
<dbReference type="GO" id="GO:0047023">
    <property type="term" value="F:androsterone dehydrogenase [NAD(P)+] activity"/>
    <property type="evidence" value="ECO:0007669"/>
    <property type="project" value="UniProtKB-EC"/>
</dbReference>
<dbReference type="GO" id="GO:0042802">
    <property type="term" value="F:identical protein binding"/>
    <property type="evidence" value="ECO:0000314"/>
    <property type="project" value="UniProtKB"/>
</dbReference>
<dbReference type="GO" id="GO:0042904">
    <property type="term" value="P:9-cis-retinoic acid biosynthetic process"/>
    <property type="evidence" value="ECO:0000314"/>
    <property type="project" value="MGI"/>
</dbReference>
<dbReference type="GO" id="GO:0001523">
    <property type="term" value="P:retinoid metabolic process"/>
    <property type="evidence" value="ECO:0000314"/>
    <property type="project" value="UniProtKB"/>
</dbReference>
<dbReference type="GO" id="GO:0042572">
    <property type="term" value="P:retinol metabolic process"/>
    <property type="evidence" value="ECO:0007669"/>
    <property type="project" value="UniProtKB-UniPathway"/>
</dbReference>
<dbReference type="GO" id="GO:0008202">
    <property type="term" value="P:steroid metabolic process"/>
    <property type="evidence" value="ECO:0000314"/>
    <property type="project" value="UniProtKB"/>
</dbReference>
<dbReference type="CDD" id="cd09805">
    <property type="entry name" value="type2_17beta_HSD-like_SDR_c"/>
    <property type="match status" value="1"/>
</dbReference>
<dbReference type="FunFam" id="3.40.50.720:FF:000074">
    <property type="entry name" value="Retinol dehydrogenase type 1"/>
    <property type="match status" value="1"/>
</dbReference>
<dbReference type="Gene3D" id="3.40.50.720">
    <property type="entry name" value="NAD(P)-binding Rossmann-like Domain"/>
    <property type="match status" value="1"/>
</dbReference>
<dbReference type="InterPro" id="IPR036291">
    <property type="entry name" value="NAD(P)-bd_dom_sf"/>
</dbReference>
<dbReference type="InterPro" id="IPR020904">
    <property type="entry name" value="Sc_DH/Rdtase_CS"/>
</dbReference>
<dbReference type="InterPro" id="IPR002347">
    <property type="entry name" value="SDR_fam"/>
</dbReference>
<dbReference type="PANTHER" id="PTHR43313:SF14">
    <property type="entry name" value="CIS-RETINOL_3ALPHA HYDROXYSTEROL SHORT-CHAIN DEHYDROGENASE-LIKE PROTEIN-RELATED"/>
    <property type="match status" value="1"/>
</dbReference>
<dbReference type="PANTHER" id="PTHR43313">
    <property type="entry name" value="SHORT-CHAIN DEHYDROGENASE/REDUCTASE FAMILY 9C"/>
    <property type="match status" value="1"/>
</dbReference>
<dbReference type="Pfam" id="PF00106">
    <property type="entry name" value="adh_short"/>
    <property type="match status" value="1"/>
</dbReference>
<dbReference type="PRINTS" id="PR00081">
    <property type="entry name" value="GDHRDH"/>
</dbReference>
<dbReference type="PRINTS" id="PR00080">
    <property type="entry name" value="SDRFAMILY"/>
</dbReference>
<dbReference type="SUPFAM" id="SSF51735">
    <property type="entry name" value="NAD(P)-binding Rossmann-fold domains"/>
    <property type="match status" value="1"/>
</dbReference>
<dbReference type="PROSITE" id="PS00061">
    <property type="entry name" value="ADH_SHORT"/>
    <property type="match status" value="1"/>
</dbReference>
<proteinExistence type="evidence at protein level"/>